<name>IHFA_VIBVY</name>
<feature type="chain" id="PRO_0000105032" description="Integration host factor subunit alpha">
    <location>
        <begin position="1"/>
        <end position="95"/>
    </location>
</feature>
<feature type="region of interest" description="Disordered" evidence="2">
    <location>
        <begin position="51"/>
        <end position="71"/>
    </location>
</feature>
<feature type="compositionally biased region" description="Basic and acidic residues" evidence="2">
    <location>
        <begin position="53"/>
        <end position="69"/>
    </location>
</feature>
<dbReference type="EMBL" id="BA000037">
    <property type="protein sequence ID" value="BAC94730.1"/>
    <property type="molecule type" value="Genomic_DNA"/>
</dbReference>
<dbReference type="RefSeq" id="WP_011080242.1">
    <property type="nucleotide sequence ID" value="NC_005139.1"/>
</dbReference>
<dbReference type="SMR" id="Q7MK44"/>
<dbReference type="STRING" id="672.VV93_v1c17260"/>
<dbReference type="KEGG" id="vvy:VV1966"/>
<dbReference type="eggNOG" id="COG0776">
    <property type="taxonomic scope" value="Bacteria"/>
</dbReference>
<dbReference type="HOGENOM" id="CLU_105066_1_3_6"/>
<dbReference type="Proteomes" id="UP000002675">
    <property type="component" value="Chromosome I"/>
</dbReference>
<dbReference type="GO" id="GO:0005829">
    <property type="term" value="C:cytosol"/>
    <property type="evidence" value="ECO:0007669"/>
    <property type="project" value="TreeGrafter"/>
</dbReference>
<dbReference type="GO" id="GO:0003677">
    <property type="term" value="F:DNA binding"/>
    <property type="evidence" value="ECO:0007669"/>
    <property type="project" value="UniProtKB-UniRule"/>
</dbReference>
<dbReference type="GO" id="GO:0030527">
    <property type="term" value="F:structural constituent of chromatin"/>
    <property type="evidence" value="ECO:0007669"/>
    <property type="project" value="InterPro"/>
</dbReference>
<dbReference type="GO" id="GO:0006310">
    <property type="term" value="P:DNA recombination"/>
    <property type="evidence" value="ECO:0007669"/>
    <property type="project" value="UniProtKB-UniRule"/>
</dbReference>
<dbReference type="GO" id="GO:0009893">
    <property type="term" value="P:positive regulation of metabolic process"/>
    <property type="evidence" value="ECO:0007669"/>
    <property type="project" value="UniProtKB-ARBA"/>
</dbReference>
<dbReference type="GO" id="GO:0006355">
    <property type="term" value="P:regulation of DNA-templated transcription"/>
    <property type="evidence" value="ECO:0007669"/>
    <property type="project" value="UniProtKB-UniRule"/>
</dbReference>
<dbReference type="GO" id="GO:0006417">
    <property type="term" value="P:regulation of translation"/>
    <property type="evidence" value="ECO:0007669"/>
    <property type="project" value="UniProtKB-UniRule"/>
</dbReference>
<dbReference type="CDD" id="cd13835">
    <property type="entry name" value="IHF_A"/>
    <property type="match status" value="1"/>
</dbReference>
<dbReference type="FunFam" id="4.10.520.10:FF:000002">
    <property type="entry name" value="Integration host factor subunit alpha"/>
    <property type="match status" value="1"/>
</dbReference>
<dbReference type="Gene3D" id="4.10.520.10">
    <property type="entry name" value="IHF-like DNA-binding proteins"/>
    <property type="match status" value="1"/>
</dbReference>
<dbReference type="HAMAP" id="MF_00380">
    <property type="entry name" value="IHF_alpha"/>
    <property type="match status" value="1"/>
</dbReference>
<dbReference type="InterPro" id="IPR000119">
    <property type="entry name" value="Hist_DNA-bd"/>
</dbReference>
<dbReference type="InterPro" id="IPR020816">
    <property type="entry name" value="Histone-like_DNA-bd_CS"/>
</dbReference>
<dbReference type="InterPro" id="IPR010992">
    <property type="entry name" value="IHF-like_DNA-bd_dom_sf"/>
</dbReference>
<dbReference type="InterPro" id="IPR005684">
    <property type="entry name" value="IHF_alpha"/>
</dbReference>
<dbReference type="NCBIfam" id="TIGR00987">
    <property type="entry name" value="himA"/>
    <property type="match status" value="1"/>
</dbReference>
<dbReference type="NCBIfam" id="NF001401">
    <property type="entry name" value="PRK00285.1"/>
    <property type="match status" value="1"/>
</dbReference>
<dbReference type="PANTHER" id="PTHR33175">
    <property type="entry name" value="DNA-BINDING PROTEIN HU"/>
    <property type="match status" value="1"/>
</dbReference>
<dbReference type="PANTHER" id="PTHR33175:SF2">
    <property type="entry name" value="INTEGRATION HOST FACTOR SUBUNIT ALPHA"/>
    <property type="match status" value="1"/>
</dbReference>
<dbReference type="Pfam" id="PF00216">
    <property type="entry name" value="Bac_DNA_binding"/>
    <property type="match status" value="1"/>
</dbReference>
<dbReference type="PRINTS" id="PR01727">
    <property type="entry name" value="DNABINDINGHU"/>
</dbReference>
<dbReference type="SMART" id="SM00411">
    <property type="entry name" value="BHL"/>
    <property type="match status" value="1"/>
</dbReference>
<dbReference type="SUPFAM" id="SSF47729">
    <property type="entry name" value="IHF-like DNA-binding proteins"/>
    <property type="match status" value="1"/>
</dbReference>
<dbReference type="PROSITE" id="PS00045">
    <property type="entry name" value="HISTONE_LIKE"/>
    <property type="match status" value="1"/>
</dbReference>
<accession>Q7MK44</accession>
<gene>
    <name evidence="1" type="primary">ihfA</name>
    <name evidence="1" type="synonym">himA</name>
    <name type="ordered locus">VV1966</name>
</gene>
<sequence length="95" mass="10835">MALTKADLAENLFEKLGFSKRDAKDTVEVFFEEIRKALENGEQVKLSGFGNFDLRDKNERPGRNPKTGEDIPITARRVVTFRPGQKLKARVENLK</sequence>
<proteinExistence type="inferred from homology"/>
<protein>
    <recommendedName>
        <fullName evidence="1">Integration host factor subunit alpha</fullName>
        <shortName evidence="1">IHF-alpha</shortName>
    </recommendedName>
</protein>
<organism>
    <name type="scientific">Vibrio vulnificus (strain YJ016)</name>
    <dbReference type="NCBI Taxonomy" id="196600"/>
    <lineage>
        <taxon>Bacteria</taxon>
        <taxon>Pseudomonadati</taxon>
        <taxon>Pseudomonadota</taxon>
        <taxon>Gammaproteobacteria</taxon>
        <taxon>Vibrionales</taxon>
        <taxon>Vibrionaceae</taxon>
        <taxon>Vibrio</taxon>
    </lineage>
</organism>
<evidence type="ECO:0000255" key="1">
    <source>
        <dbReference type="HAMAP-Rule" id="MF_00380"/>
    </source>
</evidence>
<evidence type="ECO:0000256" key="2">
    <source>
        <dbReference type="SAM" id="MobiDB-lite"/>
    </source>
</evidence>
<comment type="function">
    <text evidence="1">This protein is one of the two subunits of integration host factor, a specific DNA-binding protein that functions in genetic recombination as well as in transcriptional and translational control.</text>
</comment>
<comment type="subunit">
    <text evidence="1">Heterodimer of an alpha and a beta chain.</text>
</comment>
<comment type="similarity">
    <text evidence="1">Belongs to the bacterial histone-like protein family.</text>
</comment>
<reference key="1">
    <citation type="journal article" date="2003" name="Genome Res.">
        <title>Comparative genome analysis of Vibrio vulnificus, a marine pathogen.</title>
        <authorList>
            <person name="Chen C.-Y."/>
            <person name="Wu K.-M."/>
            <person name="Chang Y.-C."/>
            <person name="Chang C.-H."/>
            <person name="Tsai H.-C."/>
            <person name="Liao T.-L."/>
            <person name="Liu Y.-M."/>
            <person name="Chen H.-J."/>
            <person name="Shen A.B.-T."/>
            <person name="Li J.-C."/>
            <person name="Su T.-L."/>
            <person name="Shao C.-P."/>
            <person name="Lee C.-T."/>
            <person name="Hor L.-I."/>
            <person name="Tsai S.-F."/>
        </authorList>
    </citation>
    <scope>NUCLEOTIDE SEQUENCE [LARGE SCALE GENOMIC DNA]</scope>
    <source>
        <strain>YJ016</strain>
    </source>
</reference>
<keyword id="KW-0233">DNA recombination</keyword>
<keyword id="KW-0238">DNA-binding</keyword>
<keyword id="KW-0804">Transcription</keyword>
<keyword id="KW-0805">Transcription regulation</keyword>
<keyword id="KW-0810">Translation regulation</keyword>